<accession>Q0U194</accession>
<gene>
    <name type="primary">SDS23</name>
    <name type="ORF">SNOG_14603</name>
</gene>
<keyword id="KW-0129">CBS domain</keyword>
<keyword id="KW-0963">Cytoplasm</keyword>
<keyword id="KW-0539">Nucleus</keyword>
<keyword id="KW-0677">Repeat</keyword>
<evidence type="ECO:0000250" key="1"/>
<evidence type="ECO:0000255" key="2">
    <source>
        <dbReference type="PROSITE-ProRule" id="PRU00703"/>
    </source>
</evidence>
<evidence type="ECO:0000256" key="3">
    <source>
        <dbReference type="SAM" id="MobiDB-lite"/>
    </source>
</evidence>
<evidence type="ECO:0000305" key="4"/>
<feature type="chain" id="PRO_0000324956" description="Protein SDS23">
    <location>
        <begin position="1"/>
        <end position="536"/>
    </location>
</feature>
<feature type="domain" description="CBS 1" evidence="2">
    <location>
        <begin position="105"/>
        <end position="170"/>
    </location>
</feature>
<feature type="domain" description="CBS 2" evidence="2">
    <location>
        <begin position="198"/>
        <end position="256"/>
    </location>
</feature>
<feature type="domain" description="CBS 3" evidence="2">
    <location>
        <begin position="274"/>
        <end position="331"/>
    </location>
</feature>
<feature type="domain" description="CBS 4" evidence="2">
    <location>
        <begin position="335"/>
        <end position="391"/>
    </location>
</feature>
<feature type="region of interest" description="Disordered" evidence="3">
    <location>
        <begin position="1"/>
        <end position="71"/>
    </location>
</feature>
<feature type="region of interest" description="Disordered" evidence="3">
    <location>
        <begin position="473"/>
        <end position="536"/>
    </location>
</feature>
<feature type="compositionally biased region" description="Basic and acidic residues" evidence="3">
    <location>
        <begin position="1"/>
        <end position="13"/>
    </location>
</feature>
<feature type="compositionally biased region" description="Polar residues" evidence="3">
    <location>
        <begin position="57"/>
        <end position="71"/>
    </location>
</feature>
<protein>
    <recommendedName>
        <fullName>Protein SDS23</fullName>
    </recommendedName>
</protein>
<proteinExistence type="inferred from homology"/>
<name>SDS23_PHANO</name>
<comment type="function">
    <text evidence="1">Involved in DNA replication and cell separation.</text>
</comment>
<comment type="subcellular location">
    <subcellularLocation>
        <location evidence="1">Cytoplasm</location>
    </subcellularLocation>
    <subcellularLocation>
        <location evidence="1">Nucleus</location>
    </subcellularLocation>
</comment>
<comment type="similarity">
    <text evidence="4">Belongs to the SDS23 family.</text>
</comment>
<organism>
    <name type="scientific">Phaeosphaeria nodorum (strain SN15 / ATCC MYA-4574 / FGSC 10173)</name>
    <name type="common">Glume blotch fungus</name>
    <name type="synonym">Parastagonospora nodorum</name>
    <dbReference type="NCBI Taxonomy" id="321614"/>
    <lineage>
        <taxon>Eukaryota</taxon>
        <taxon>Fungi</taxon>
        <taxon>Dikarya</taxon>
        <taxon>Ascomycota</taxon>
        <taxon>Pezizomycotina</taxon>
        <taxon>Dothideomycetes</taxon>
        <taxon>Pleosporomycetidae</taxon>
        <taxon>Pleosporales</taxon>
        <taxon>Pleosporineae</taxon>
        <taxon>Phaeosphaeriaceae</taxon>
        <taxon>Parastagonospora</taxon>
    </lineage>
</organism>
<dbReference type="EMBL" id="CH445356">
    <property type="protein sequence ID" value="EAT78143.1"/>
    <property type="molecule type" value="Genomic_DNA"/>
</dbReference>
<dbReference type="RefSeq" id="XP_001804785.1">
    <property type="nucleotide sequence ID" value="XM_001804733.1"/>
</dbReference>
<dbReference type="SMR" id="Q0U194"/>
<dbReference type="FunCoup" id="Q0U194">
    <property type="interactions" value="202"/>
</dbReference>
<dbReference type="STRING" id="321614.Q0U194"/>
<dbReference type="EnsemblFungi" id="SNOT_14603">
    <property type="protein sequence ID" value="SNOT_14603"/>
    <property type="gene ID" value="SNOG_14603"/>
</dbReference>
<dbReference type="GeneID" id="5981710"/>
<dbReference type="KEGG" id="pno:SNOG_14603"/>
<dbReference type="VEuPathDB" id="FungiDB:JI435_146030"/>
<dbReference type="eggNOG" id="KOG1764">
    <property type="taxonomic scope" value="Eukaryota"/>
</dbReference>
<dbReference type="HOGENOM" id="CLU_024459_0_0_1"/>
<dbReference type="InParanoid" id="Q0U194"/>
<dbReference type="OMA" id="DWTQISI"/>
<dbReference type="Proteomes" id="UP000001055">
    <property type="component" value="Unassembled WGS sequence"/>
</dbReference>
<dbReference type="GO" id="GO:0005737">
    <property type="term" value="C:cytoplasm"/>
    <property type="evidence" value="ECO:0007669"/>
    <property type="project" value="UniProtKB-SubCell"/>
</dbReference>
<dbReference type="GO" id="GO:0005634">
    <property type="term" value="C:nucleus"/>
    <property type="evidence" value="ECO:0007669"/>
    <property type="project" value="UniProtKB-SubCell"/>
</dbReference>
<dbReference type="GO" id="GO:0004865">
    <property type="term" value="F:protein serine/threonine phosphatase inhibitor activity"/>
    <property type="evidence" value="ECO:0000318"/>
    <property type="project" value="GO_Central"/>
</dbReference>
<dbReference type="GO" id="GO:0042149">
    <property type="term" value="P:cellular response to glucose starvation"/>
    <property type="evidence" value="ECO:0000318"/>
    <property type="project" value="GO_Central"/>
</dbReference>
<dbReference type="GO" id="GO:0030071">
    <property type="term" value="P:regulation of mitotic metaphase/anaphase transition"/>
    <property type="evidence" value="ECO:0007669"/>
    <property type="project" value="InterPro"/>
</dbReference>
<dbReference type="CDD" id="cd02205">
    <property type="entry name" value="CBS_pair_SF"/>
    <property type="match status" value="1"/>
</dbReference>
<dbReference type="Gene3D" id="3.10.580.10">
    <property type="entry name" value="CBS-domain"/>
    <property type="match status" value="2"/>
</dbReference>
<dbReference type="InterPro" id="IPR050511">
    <property type="entry name" value="AMPK_gamma/SDS23_families"/>
</dbReference>
<dbReference type="InterPro" id="IPR000644">
    <property type="entry name" value="CBS_dom"/>
</dbReference>
<dbReference type="InterPro" id="IPR046342">
    <property type="entry name" value="CBS_dom_sf"/>
</dbReference>
<dbReference type="InterPro" id="IPR016711">
    <property type="entry name" value="Ssd23"/>
</dbReference>
<dbReference type="PANTHER" id="PTHR13780">
    <property type="entry name" value="AMP-ACTIVATED PROTEIN KINASE, GAMMA REGULATORY SUBUNIT"/>
    <property type="match status" value="1"/>
</dbReference>
<dbReference type="PANTHER" id="PTHR13780:SF36">
    <property type="entry name" value="CBS DOMAIN-CONTAINING PROTEIN"/>
    <property type="match status" value="1"/>
</dbReference>
<dbReference type="Pfam" id="PF00571">
    <property type="entry name" value="CBS"/>
    <property type="match status" value="2"/>
</dbReference>
<dbReference type="PIRSF" id="PIRSF018148">
    <property type="entry name" value="UCP018148_CBS_YBR214w"/>
    <property type="match status" value="1"/>
</dbReference>
<dbReference type="SMART" id="SM00116">
    <property type="entry name" value="CBS"/>
    <property type="match status" value="2"/>
</dbReference>
<dbReference type="SUPFAM" id="SSF54631">
    <property type="entry name" value="CBS-domain pair"/>
    <property type="match status" value="2"/>
</dbReference>
<dbReference type="PROSITE" id="PS51371">
    <property type="entry name" value="CBS"/>
    <property type="match status" value="3"/>
</dbReference>
<reference key="1">
    <citation type="journal article" date="2007" name="Plant Cell">
        <title>Dothideomycete-plant interactions illuminated by genome sequencing and EST analysis of the wheat pathogen Stagonospora nodorum.</title>
        <authorList>
            <person name="Hane J.K."/>
            <person name="Lowe R.G.T."/>
            <person name="Solomon P.S."/>
            <person name="Tan K.-C."/>
            <person name="Schoch C.L."/>
            <person name="Spatafora J.W."/>
            <person name="Crous P.W."/>
            <person name="Kodira C.D."/>
            <person name="Birren B.W."/>
            <person name="Galagan J.E."/>
            <person name="Torriani S.F.F."/>
            <person name="McDonald B.A."/>
            <person name="Oliver R.P."/>
        </authorList>
    </citation>
    <scope>NUCLEOTIDE SEQUENCE [LARGE SCALE GENOMIC DNA]</scope>
    <source>
        <strain>SN15 / ATCC MYA-4574 / FGSC 10173</strain>
    </source>
</reference>
<sequence>MADHADATKKDGRIPSPLHSLASSTASLGRSPPPALKMASSPDPRSHRGSFAEQMRGTPSSPRASRQPSLTQSALQELLNNPPTKGGDAKFQSRDWSSVRLGELVDPSLVRFVEYDTSVEDATSILVQHGAPNVILLRDTKDTRYATGTFDYSDLNAYLLLVVGLAHPDEEDVASFDELAKKGREGKPIPLRDVKEVGNKKEPLITLPHTADLTKAIEVFGSGVHRVLVAEEGTTDVIGVLTQLQLVKFFWENRQSFPDVDQLYPRLIKDLAIGSKTVLAINGDKPLASALELMNNEGVSSLPVLDAQNNVIGNISHVDVRLLTKSTSLPLLRSSCIHFISVILSERGMNDGKDSFPVFHVNPYSTLAHTVAKLVATRSHRMWVVDSPSPSSSGPPTPALQPASLVPPSPITPLPATHIGPTPVNSTSPTHLAGTGAVAPAISASAISGASLSGRLSGVISLTDVLNLFAKASGLHPHDPDEARRARRRSSSSSMRRSMDSARSESVSAIAGRRGSVNEREKNVQGLGIARGRGNA</sequence>